<feature type="chain" id="PRO_1000097462" description="DNA-binding protein Fis">
    <location>
        <begin position="1"/>
        <end position="98"/>
    </location>
</feature>
<feature type="DNA-binding region" description="H-T-H motif" evidence="1">
    <location>
        <begin position="74"/>
        <end position="93"/>
    </location>
</feature>
<proteinExistence type="inferred from homology"/>
<comment type="function">
    <text evidence="1">Activates ribosomal RNA transcription. Plays a direct role in upstream activation of rRNA promoters.</text>
</comment>
<comment type="subunit">
    <text evidence="1">Homodimer.</text>
</comment>
<comment type="similarity">
    <text evidence="1">Belongs to the transcriptional regulatory Fis family.</text>
</comment>
<keyword id="KW-0010">Activator</keyword>
<keyword id="KW-0238">DNA-binding</keyword>
<keyword id="KW-0804">Transcription</keyword>
<keyword id="KW-0805">Transcription regulation</keyword>
<dbReference type="EMBL" id="CP001113">
    <property type="protein sequence ID" value="ACF62969.1"/>
    <property type="molecule type" value="Genomic_DNA"/>
</dbReference>
<dbReference type="RefSeq" id="WP_000462905.1">
    <property type="nucleotide sequence ID" value="NZ_CCMR01000001.1"/>
</dbReference>
<dbReference type="SMR" id="B4SUP1"/>
<dbReference type="GeneID" id="98390389"/>
<dbReference type="KEGG" id="see:SNSL254_A3649"/>
<dbReference type="HOGENOM" id="CLU_158040_3_0_6"/>
<dbReference type="Proteomes" id="UP000008824">
    <property type="component" value="Chromosome"/>
</dbReference>
<dbReference type="GO" id="GO:0003700">
    <property type="term" value="F:DNA-binding transcription factor activity"/>
    <property type="evidence" value="ECO:0007669"/>
    <property type="project" value="UniProtKB-UniRule"/>
</dbReference>
<dbReference type="GO" id="GO:0043565">
    <property type="term" value="F:sequence-specific DNA binding"/>
    <property type="evidence" value="ECO:0007669"/>
    <property type="project" value="InterPro"/>
</dbReference>
<dbReference type="FunFam" id="1.10.10.60:FF:000006">
    <property type="entry name" value="DNA-binding protein Fis"/>
    <property type="match status" value="1"/>
</dbReference>
<dbReference type="Gene3D" id="1.10.10.60">
    <property type="entry name" value="Homeodomain-like"/>
    <property type="match status" value="1"/>
</dbReference>
<dbReference type="HAMAP" id="MF_00166">
    <property type="entry name" value="DNA_binding_Fis"/>
    <property type="match status" value="1"/>
</dbReference>
<dbReference type="InterPro" id="IPR005412">
    <property type="entry name" value="Fis_DNA-bd"/>
</dbReference>
<dbReference type="InterPro" id="IPR009057">
    <property type="entry name" value="Homeodomain-like_sf"/>
</dbReference>
<dbReference type="InterPro" id="IPR002197">
    <property type="entry name" value="HTH_Fis"/>
</dbReference>
<dbReference type="InterPro" id="IPR050207">
    <property type="entry name" value="Trans_regulatory_Fis"/>
</dbReference>
<dbReference type="NCBIfam" id="NF001659">
    <property type="entry name" value="PRK00430.1"/>
    <property type="match status" value="1"/>
</dbReference>
<dbReference type="PANTHER" id="PTHR47918">
    <property type="entry name" value="DNA-BINDING PROTEIN FIS"/>
    <property type="match status" value="1"/>
</dbReference>
<dbReference type="PANTHER" id="PTHR47918:SF1">
    <property type="entry name" value="DNA-BINDING PROTEIN FIS"/>
    <property type="match status" value="1"/>
</dbReference>
<dbReference type="Pfam" id="PF02954">
    <property type="entry name" value="HTH_8"/>
    <property type="match status" value="1"/>
</dbReference>
<dbReference type="PIRSF" id="PIRSF002097">
    <property type="entry name" value="DNA-binding_Fis"/>
    <property type="match status" value="1"/>
</dbReference>
<dbReference type="PRINTS" id="PR01591">
    <property type="entry name" value="DNABINDNGFIS"/>
</dbReference>
<dbReference type="PRINTS" id="PR01590">
    <property type="entry name" value="HTHFIS"/>
</dbReference>
<dbReference type="SUPFAM" id="SSF46689">
    <property type="entry name" value="Homeodomain-like"/>
    <property type="match status" value="1"/>
</dbReference>
<accession>B4SUP1</accession>
<reference key="1">
    <citation type="journal article" date="2011" name="J. Bacteriol.">
        <title>Comparative genomics of 28 Salmonella enterica isolates: evidence for CRISPR-mediated adaptive sublineage evolution.</title>
        <authorList>
            <person name="Fricke W.F."/>
            <person name="Mammel M.K."/>
            <person name="McDermott P.F."/>
            <person name="Tartera C."/>
            <person name="White D.G."/>
            <person name="Leclerc J.E."/>
            <person name="Ravel J."/>
            <person name="Cebula T.A."/>
        </authorList>
    </citation>
    <scope>NUCLEOTIDE SEQUENCE [LARGE SCALE GENOMIC DNA]</scope>
    <source>
        <strain>SL254</strain>
    </source>
</reference>
<gene>
    <name evidence="1" type="primary">fis</name>
    <name type="ordered locus">SNSL254_A3649</name>
</gene>
<evidence type="ECO:0000255" key="1">
    <source>
        <dbReference type="HAMAP-Rule" id="MF_00166"/>
    </source>
</evidence>
<protein>
    <recommendedName>
        <fullName evidence="1">DNA-binding protein Fis</fullName>
    </recommendedName>
</protein>
<organism>
    <name type="scientific">Salmonella newport (strain SL254)</name>
    <dbReference type="NCBI Taxonomy" id="423368"/>
    <lineage>
        <taxon>Bacteria</taxon>
        <taxon>Pseudomonadati</taxon>
        <taxon>Pseudomonadota</taxon>
        <taxon>Gammaproteobacteria</taxon>
        <taxon>Enterobacterales</taxon>
        <taxon>Enterobacteriaceae</taxon>
        <taxon>Salmonella</taxon>
    </lineage>
</organism>
<sequence length="98" mass="11240">MFEQRVNSDVLTVSTVNSQDQVTQKPLRDSVKQALKNYFAQLNGQDVNDLYELVLAEVEQPLLDMVMQYTRGNQTRAALMMGINRGTLRKKLKKYGMN</sequence>
<name>FIS_SALNS</name>